<proteinExistence type="evidence at protein level"/>
<comment type="function">
    <text evidence="2">Major acute phase reactant.</text>
</comment>
<comment type="subunit">
    <text evidence="3">Apolipoprotein of the HDL complex.</text>
</comment>
<comment type="subcellular location">
    <subcellularLocation>
        <location evidence="3">Secreted</location>
    </subcellularLocation>
</comment>
<comment type="tissue specificity">
    <text evidence="7">Expressed by the liver; secreted in plasma.</text>
</comment>
<comment type="similarity">
    <text evidence="8">Belongs to the SAA family.</text>
</comment>
<protein>
    <recommendedName>
        <fullName evidence="8">Serum amyloid A-2 protein</fullName>
    </recommendedName>
    <component>
        <recommendedName>
            <fullName evidence="1">Amyloid protein A</fullName>
        </recommendedName>
    </component>
</protein>
<gene>
    <name evidence="9" type="primary">Saa2</name>
</gene>
<keyword id="KW-0002">3D-structure</keyword>
<keyword id="KW-0011">Acute phase</keyword>
<keyword id="KW-0034">Amyloid</keyword>
<keyword id="KW-0903">Direct protein sequencing</keyword>
<keyword id="KW-0345">HDL</keyword>
<keyword id="KW-1185">Reference proteome</keyword>
<keyword id="KW-0964">Secreted</keyword>
<keyword id="KW-0732">Signal</keyword>
<organism>
    <name type="scientific">Mus musculus</name>
    <name type="common">Mouse</name>
    <dbReference type="NCBI Taxonomy" id="10090"/>
    <lineage>
        <taxon>Eukaryota</taxon>
        <taxon>Metazoa</taxon>
        <taxon>Chordata</taxon>
        <taxon>Craniata</taxon>
        <taxon>Vertebrata</taxon>
        <taxon>Euteleostomi</taxon>
        <taxon>Mammalia</taxon>
        <taxon>Eutheria</taxon>
        <taxon>Euarchontoglires</taxon>
        <taxon>Glires</taxon>
        <taxon>Rodentia</taxon>
        <taxon>Myomorpha</taxon>
        <taxon>Muroidea</taxon>
        <taxon>Muridae</taxon>
        <taxon>Murinae</taxon>
        <taxon>Mus</taxon>
        <taxon>Mus</taxon>
    </lineage>
</organism>
<accession>P05367</accession>
<dbReference type="EMBL" id="M13522">
    <property type="protein sequence ID" value="AAA40086.1"/>
    <property type="molecule type" value="Genomic_DNA"/>
</dbReference>
<dbReference type="EMBL" id="M11130">
    <property type="protein sequence ID" value="AAA40085.1"/>
    <property type="molecule type" value="mRNA"/>
</dbReference>
<dbReference type="EMBL" id="M17791">
    <property type="protein sequence ID" value="AAA40087.1"/>
    <property type="molecule type" value="Genomic_DNA"/>
</dbReference>
<dbReference type="CCDS" id="CCDS21285.1"/>
<dbReference type="PIR" id="B23843">
    <property type="entry name" value="B23843"/>
</dbReference>
<dbReference type="RefSeq" id="NP_001344420.1">
    <property type="nucleotide sequence ID" value="NM_001357491.2"/>
</dbReference>
<dbReference type="RefSeq" id="NP_001366197.1">
    <property type="nucleotide sequence ID" value="NM_001379268.1"/>
</dbReference>
<dbReference type="RefSeq" id="NP_001366198.1">
    <property type="nucleotide sequence ID" value="NM_001379269.1"/>
</dbReference>
<dbReference type="RefSeq" id="NP_035444.1">
    <property type="nucleotide sequence ID" value="NM_011314.3"/>
</dbReference>
<dbReference type="RefSeq" id="XP_006540790.1">
    <property type="nucleotide sequence ID" value="XM_006540727.2"/>
</dbReference>
<dbReference type="PDB" id="6DSO">
    <property type="method" value="EM"/>
    <property type="resolution" value="3.00 A"/>
    <property type="chains" value="A/B/C/D/E/F/G/H/I/J/K/L=20-102"/>
</dbReference>
<dbReference type="PDB" id="6ZCF">
    <property type="method" value="EM"/>
    <property type="resolution" value="2.73 A"/>
    <property type="chains" value="A/B/C/D/E/F/G/H/I/J/K/L=20-122"/>
</dbReference>
<dbReference type="PDB" id="6ZCG">
    <property type="method" value="EM"/>
    <property type="resolution" value="2.95 A"/>
    <property type="chains" value="A/B/C/D/E/F/G/H/I/J/K/L/M/N/O/P/Q/R/S/T/U/V/W/X=20-122"/>
</dbReference>
<dbReference type="PDB" id="6ZCH">
    <property type="method" value="EM"/>
    <property type="resolution" value="3.50 A"/>
    <property type="chains" value="A/B/C/D/E/F/G/H/I/J/K/L/M/N/O/P/Q/R=20-102"/>
</dbReference>
<dbReference type="PDB" id="7OVT">
    <property type="method" value="EM"/>
    <property type="resolution" value="2.69 A"/>
    <property type="chains" value="A/B/C/D/E/F/G/H/I/J/K/L=20-122"/>
</dbReference>
<dbReference type="PDBsum" id="6DSO"/>
<dbReference type="PDBsum" id="6ZCF"/>
<dbReference type="PDBsum" id="6ZCG"/>
<dbReference type="PDBsum" id="6ZCH"/>
<dbReference type="PDBsum" id="7OVT"/>
<dbReference type="EMDB" id="EMD-11162"/>
<dbReference type="EMDB" id="EMD-11163"/>
<dbReference type="EMDB" id="EMD-11164"/>
<dbReference type="EMDB" id="EMD-13089"/>
<dbReference type="EMDB" id="EMD-8910"/>
<dbReference type="SMR" id="P05367"/>
<dbReference type="BioGRID" id="203062">
    <property type="interactions" value="1"/>
</dbReference>
<dbReference type="FunCoup" id="P05367">
    <property type="interactions" value="8"/>
</dbReference>
<dbReference type="STRING" id="10090.ENSMUSP00000147751"/>
<dbReference type="PhosphoSitePlus" id="P05367"/>
<dbReference type="CPTAC" id="non-CPTAC-3944"/>
<dbReference type="PaxDb" id="10090-ENSMUSP00000075365"/>
<dbReference type="PeptideAtlas" id="P05367"/>
<dbReference type="ProteomicsDB" id="255451"/>
<dbReference type="DNASU" id="20209"/>
<dbReference type="Ensembl" id="ENSMUST00000075982.4">
    <property type="protein sequence ID" value="ENSMUSP00000075365.3"/>
    <property type="gene ID" value="ENSMUSG00000057465.6"/>
</dbReference>
<dbReference type="Ensembl" id="ENSMUST00000210769.2">
    <property type="protein sequence ID" value="ENSMUSP00000147751.2"/>
    <property type="gene ID" value="ENSMUSG00000057465.6"/>
</dbReference>
<dbReference type="GeneID" id="20209"/>
<dbReference type="KEGG" id="mmu:20209"/>
<dbReference type="UCSC" id="uc009gzb.2">
    <property type="organism name" value="mouse"/>
</dbReference>
<dbReference type="AGR" id="MGI:98222"/>
<dbReference type="CTD" id="6289"/>
<dbReference type="MGI" id="MGI:98222">
    <property type="gene designation" value="Saa2"/>
</dbReference>
<dbReference type="VEuPathDB" id="HostDB:ENSMUSG00000057465"/>
<dbReference type="eggNOG" id="ENOG502S4PB">
    <property type="taxonomic scope" value="Eukaryota"/>
</dbReference>
<dbReference type="GeneTree" id="ENSGT00390000004737"/>
<dbReference type="HOGENOM" id="CLU_129936_0_0_1"/>
<dbReference type="InParanoid" id="P05367"/>
<dbReference type="OMA" id="RLWVCIA"/>
<dbReference type="OrthoDB" id="6112826at2759"/>
<dbReference type="PhylomeDB" id="P05367"/>
<dbReference type="TreeFam" id="TF332544"/>
<dbReference type="BioGRID-ORCS" id="20209">
    <property type="hits" value="5 hits in 45 CRISPR screens"/>
</dbReference>
<dbReference type="ChiTaRS" id="Saa1">
    <property type="organism name" value="mouse"/>
</dbReference>
<dbReference type="PRO" id="PR:P05367"/>
<dbReference type="Proteomes" id="UP000000589">
    <property type="component" value="Chromosome 7"/>
</dbReference>
<dbReference type="RNAct" id="P05367">
    <property type="molecule type" value="protein"/>
</dbReference>
<dbReference type="Bgee" id="ENSMUSG00000057465">
    <property type="expression patterns" value="Expressed in left lobe of liver and 72 other cell types or tissues"/>
</dbReference>
<dbReference type="ExpressionAtlas" id="P05367">
    <property type="expression patterns" value="baseline and differential"/>
</dbReference>
<dbReference type="GO" id="GO:0034364">
    <property type="term" value="C:high-density lipoprotein particle"/>
    <property type="evidence" value="ECO:0007669"/>
    <property type="project" value="UniProtKB-KW"/>
</dbReference>
<dbReference type="GO" id="GO:0006953">
    <property type="term" value="P:acute-phase response"/>
    <property type="evidence" value="ECO:0007669"/>
    <property type="project" value="UniProtKB-KW"/>
</dbReference>
<dbReference type="GO" id="GO:0035634">
    <property type="term" value="P:response to stilbenoid"/>
    <property type="evidence" value="ECO:0000270"/>
    <property type="project" value="UniProtKB"/>
</dbReference>
<dbReference type="FunFam" id="1.10.132.110:FF:000001">
    <property type="entry name" value="Serum amyloid A protein"/>
    <property type="match status" value="1"/>
</dbReference>
<dbReference type="Gene3D" id="1.10.132.110">
    <property type="entry name" value="Serum amyloid A protein"/>
    <property type="match status" value="1"/>
</dbReference>
<dbReference type="InterPro" id="IPR000096">
    <property type="entry name" value="Serum_amyloid_A"/>
</dbReference>
<dbReference type="InterPro" id="IPR052464">
    <property type="entry name" value="Synovial_Prolif_Regulator"/>
</dbReference>
<dbReference type="PANTHER" id="PTHR23424">
    <property type="entry name" value="SERUM AMYLOID A"/>
    <property type="match status" value="1"/>
</dbReference>
<dbReference type="PANTHER" id="PTHR23424:SF29">
    <property type="entry name" value="SERUM AMYLOID A PROTEIN"/>
    <property type="match status" value="1"/>
</dbReference>
<dbReference type="Pfam" id="PF00277">
    <property type="entry name" value="SAA"/>
    <property type="match status" value="1"/>
</dbReference>
<dbReference type="PIRSF" id="PIRSF002472">
    <property type="entry name" value="Serum_amyloid_A"/>
    <property type="match status" value="1"/>
</dbReference>
<dbReference type="PRINTS" id="PR00306">
    <property type="entry name" value="SERUMAMYLOID"/>
</dbReference>
<dbReference type="SMART" id="SM00197">
    <property type="entry name" value="SAA"/>
    <property type="match status" value="1"/>
</dbReference>
<dbReference type="PROSITE" id="PS00992">
    <property type="entry name" value="SAA"/>
    <property type="match status" value="1"/>
</dbReference>
<sequence length="122" mass="13622">MKLLTSLVFCSLLLGVCHGGFFSFIGEAFQGAGDMWRAYTDMKEAGWKDGDKYFHARGNYDAAQRGPGGVWAAEKISDARESFQEFFGRGHEDTMADQEANRHGRSGKDPNYYRPPGLPAKY</sequence>
<evidence type="ECO:0000250" key="1">
    <source>
        <dbReference type="UniProtKB" id="P02739"/>
    </source>
</evidence>
<evidence type="ECO:0000250" key="2">
    <source>
        <dbReference type="UniProtKB" id="P05366"/>
    </source>
</evidence>
<evidence type="ECO:0000250" key="3">
    <source>
        <dbReference type="UniProtKB" id="P0DJI8"/>
    </source>
</evidence>
<evidence type="ECO:0000250" key="4">
    <source>
        <dbReference type="UniProtKB" id="P0DJI9"/>
    </source>
</evidence>
<evidence type="ECO:0000256" key="5">
    <source>
        <dbReference type="SAM" id="MobiDB-lite"/>
    </source>
</evidence>
<evidence type="ECO:0000269" key="6">
    <source>
    </source>
</evidence>
<evidence type="ECO:0000269" key="7">
    <source>
    </source>
</evidence>
<evidence type="ECO:0000305" key="8"/>
<evidence type="ECO:0000312" key="9">
    <source>
        <dbReference type="MGI" id="MGI:98222"/>
    </source>
</evidence>
<evidence type="ECO:0007829" key="10">
    <source>
        <dbReference type="PDB" id="7OVT"/>
    </source>
</evidence>
<feature type="signal peptide" evidence="6">
    <location>
        <begin position="1"/>
        <end position="19"/>
    </location>
</feature>
<feature type="chain" id="PRO_0000031589" description="Serum amyloid A-2 protein" evidence="6">
    <location>
        <begin position="20"/>
        <end position="122"/>
    </location>
</feature>
<feature type="chain" id="PRO_0000031590" description="Amyloid protein A" evidence="4">
    <location>
        <begin position="20"/>
        <end position="94"/>
    </location>
</feature>
<feature type="region of interest" description="Disordered" evidence="5">
    <location>
        <begin position="89"/>
        <end position="122"/>
    </location>
</feature>
<feature type="compositionally biased region" description="Basic and acidic residues" evidence="5">
    <location>
        <begin position="89"/>
        <end position="108"/>
    </location>
</feature>
<feature type="sequence variant" description="In strain: SJL/J.">
    <original>A</original>
    <variation>D</variation>
    <location>
        <position position="120"/>
    </location>
</feature>
<feature type="strand" evidence="10">
    <location>
        <begin position="21"/>
        <end position="41"/>
    </location>
</feature>
<feature type="strand" evidence="10">
    <location>
        <begin position="46"/>
        <end position="48"/>
    </location>
</feature>
<feature type="strand" evidence="10">
    <location>
        <begin position="52"/>
        <end position="58"/>
    </location>
</feature>
<feature type="strand" evidence="10">
    <location>
        <begin position="60"/>
        <end position="65"/>
    </location>
</feature>
<feature type="strand" evidence="10">
    <location>
        <begin position="70"/>
        <end position="78"/>
    </location>
</feature>
<feature type="strand" evidence="10">
    <location>
        <begin position="83"/>
        <end position="86"/>
    </location>
</feature>
<reference key="1">
    <citation type="journal article" date="1986" name="J. Biol. Chem.">
        <title>Structure of the murine serum amyloid A gene family. Gene conversion.</title>
        <authorList>
            <person name="Lowell C.A."/>
            <person name="Potter D.A."/>
            <person name="Stearman R.S."/>
            <person name="Morrow J.F."/>
        </authorList>
    </citation>
    <scope>NUCLEOTIDE SEQUENCE [GENOMIC DNA]</scope>
    <scope>TISSUE SPECIFICITY</scope>
</reference>
<reference key="2">
    <citation type="journal article" date="1985" name="Proc. Natl. Acad. Sci. U.S.A.">
        <title>Complete primary structures of two major murine serum amyloid A proteins deduced from cDNA sequences.</title>
        <authorList>
            <person name="Yamamoto K."/>
            <person name="Migita S."/>
        </authorList>
    </citation>
    <scope>NUCLEOTIDE SEQUENCE [MRNA]</scope>
</reference>
<reference key="3">
    <citation type="journal article" date="1987" name="J. Immunol.">
        <title>Structural diversity of murine serum amyloid A genes. Evolutionary implications.</title>
        <authorList>
            <person name="Yamamoto K."/>
            <person name="Goto N."/>
            <person name="Kosaka J."/>
            <person name="Shiroo M."/>
            <person name="Yeul Y.D."/>
            <person name="Migita S."/>
        </authorList>
    </citation>
    <scope>NUCLEOTIDE SEQUENCE [GENOMIC DNA] OF 32-122</scope>
</reference>
<reference key="4">
    <citation type="journal article" date="1992" name="Biochem. J.">
        <title>Mouse serum amyloid A protein. Complete amino acid sequence and mRNA analysis of a new isoform.</title>
        <authorList>
            <person name="de Beer M.C."/>
            <person name="de Beer F.C."/>
            <person name="Beach C.M."/>
            <person name="Carreras I."/>
            <person name="Sipe J.D."/>
        </authorList>
    </citation>
    <scope>PROTEIN SEQUENCE OF 20-122</scope>
    <source>
        <strain>SJL/J</strain>
    </source>
</reference>
<name>SAA2_MOUSE</name>